<protein>
    <recommendedName>
        <fullName evidence="1">Aspartate--tRNA(Asp/Asn) ligase</fullName>
        <ecNumber evidence="1">6.1.1.23</ecNumber>
    </recommendedName>
    <alternativeName>
        <fullName evidence="1">Aspartyl-tRNA synthetase</fullName>
        <shortName evidence="1">AspRS</shortName>
    </alternativeName>
    <alternativeName>
        <fullName evidence="1">Non-discriminating aspartyl-tRNA synthetase</fullName>
        <shortName evidence="1">ND-AspRS</shortName>
    </alternativeName>
</protein>
<proteinExistence type="inferred from homology"/>
<comment type="function">
    <text evidence="1">Aspartyl-tRNA synthetase with relaxed tRNA specificity since it is able to aspartylate not only its cognate tRNA(Asp) but also tRNA(Asn). Reaction proceeds in two steps: L-aspartate is first activated by ATP to form Asp-AMP and then transferred to the acceptor end of tRNA(Asp/Asn).</text>
</comment>
<comment type="catalytic activity">
    <reaction evidence="1">
        <text>tRNA(Asx) + L-aspartate + ATP = L-aspartyl-tRNA(Asx) + AMP + diphosphate</text>
        <dbReference type="Rhea" id="RHEA:18349"/>
        <dbReference type="Rhea" id="RHEA-COMP:9710"/>
        <dbReference type="Rhea" id="RHEA-COMP:9711"/>
        <dbReference type="ChEBI" id="CHEBI:29991"/>
        <dbReference type="ChEBI" id="CHEBI:30616"/>
        <dbReference type="ChEBI" id="CHEBI:33019"/>
        <dbReference type="ChEBI" id="CHEBI:78442"/>
        <dbReference type="ChEBI" id="CHEBI:78516"/>
        <dbReference type="ChEBI" id="CHEBI:456215"/>
        <dbReference type="EC" id="6.1.1.23"/>
    </reaction>
</comment>
<comment type="subunit">
    <text evidence="1">Homodimer.</text>
</comment>
<comment type="subcellular location">
    <subcellularLocation>
        <location evidence="1">Cytoplasm</location>
    </subcellularLocation>
</comment>
<comment type="similarity">
    <text evidence="1">Belongs to the class-II aminoacyl-tRNA synthetase family. Type 1 subfamily.</text>
</comment>
<name>SYDND_SYMTH</name>
<dbReference type="EC" id="6.1.1.23" evidence="1"/>
<dbReference type="EMBL" id="AP006840">
    <property type="protein sequence ID" value="BAD41406.1"/>
    <property type="molecule type" value="Genomic_DNA"/>
</dbReference>
<dbReference type="SMR" id="Q67LP0"/>
<dbReference type="STRING" id="292459.STH2421"/>
<dbReference type="KEGG" id="sth:STH2421"/>
<dbReference type="eggNOG" id="COG0173">
    <property type="taxonomic scope" value="Bacteria"/>
</dbReference>
<dbReference type="HOGENOM" id="CLU_014330_3_2_9"/>
<dbReference type="Proteomes" id="UP000000417">
    <property type="component" value="Chromosome"/>
</dbReference>
<dbReference type="GO" id="GO:0005737">
    <property type="term" value="C:cytoplasm"/>
    <property type="evidence" value="ECO:0007669"/>
    <property type="project" value="UniProtKB-SubCell"/>
</dbReference>
<dbReference type="GO" id="GO:0004815">
    <property type="term" value="F:aspartate-tRNA ligase activity"/>
    <property type="evidence" value="ECO:0007669"/>
    <property type="project" value="UniProtKB-UniRule"/>
</dbReference>
<dbReference type="GO" id="GO:0050560">
    <property type="term" value="F:aspartate-tRNA(Asn) ligase activity"/>
    <property type="evidence" value="ECO:0007669"/>
    <property type="project" value="UniProtKB-EC"/>
</dbReference>
<dbReference type="GO" id="GO:0005524">
    <property type="term" value="F:ATP binding"/>
    <property type="evidence" value="ECO:0007669"/>
    <property type="project" value="UniProtKB-UniRule"/>
</dbReference>
<dbReference type="GO" id="GO:0140096">
    <property type="term" value="F:catalytic activity, acting on a protein"/>
    <property type="evidence" value="ECO:0007669"/>
    <property type="project" value="UniProtKB-ARBA"/>
</dbReference>
<dbReference type="GO" id="GO:0003676">
    <property type="term" value="F:nucleic acid binding"/>
    <property type="evidence" value="ECO:0007669"/>
    <property type="project" value="InterPro"/>
</dbReference>
<dbReference type="GO" id="GO:0016740">
    <property type="term" value="F:transferase activity"/>
    <property type="evidence" value="ECO:0007669"/>
    <property type="project" value="UniProtKB-ARBA"/>
</dbReference>
<dbReference type="GO" id="GO:0006422">
    <property type="term" value="P:aspartyl-tRNA aminoacylation"/>
    <property type="evidence" value="ECO:0007669"/>
    <property type="project" value="UniProtKB-UniRule"/>
</dbReference>
<dbReference type="CDD" id="cd00777">
    <property type="entry name" value="AspRS_core"/>
    <property type="match status" value="1"/>
</dbReference>
<dbReference type="CDD" id="cd04317">
    <property type="entry name" value="EcAspRS_like_N"/>
    <property type="match status" value="1"/>
</dbReference>
<dbReference type="Gene3D" id="3.30.930.10">
    <property type="entry name" value="Bira Bifunctional Protein, Domain 2"/>
    <property type="match status" value="1"/>
</dbReference>
<dbReference type="Gene3D" id="3.30.1360.30">
    <property type="entry name" value="GAD-like domain"/>
    <property type="match status" value="1"/>
</dbReference>
<dbReference type="Gene3D" id="2.40.50.140">
    <property type="entry name" value="Nucleic acid-binding proteins"/>
    <property type="match status" value="1"/>
</dbReference>
<dbReference type="HAMAP" id="MF_00044">
    <property type="entry name" value="Asp_tRNA_synth_type1"/>
    <property type="match status" value="1"/>
</dbReference>
<dbReference type="InterPro" id="IPR004364">
    <property type="entry name" value="Aa-tRNA-synt_II"/>
</dbReference>
<dbReference type="InterPro" id="IPR006195">
    <property type="entry name" value="aa-tRNA-synth_II"/>
</dbReference>
<dbReference type="InterPro" id="IPR045864">
    <property type="entry name" value="aa-tRNA-synth_II/BPL/LPL"/>
</dbReference>
<dbReference type="InterPro" id="IPR004524">
    <property type="entry name" value="Asp-tRNA-ligase_1"/>
</dbReference>
<dbReference type="InterPro" id="IPR047089">
    <property type="entry name" value="Asp-tRNA-ligase_1_N"/>
</dbReference>
<dbReference type="InterPro" id="IPR002312">
    <property type="entry name" value="Asp/Asn-tRNA-synth_IIb"/>
</dbReference>
<dbReference type="InterPro" id="IPR047090">
    <property type="entry name" value="AspRS_core"/>
</dbReference>
<dbReference type="InterPro" id="IPR004115">
    <property type="entry name" value="GAD-like_sf"/>
</dbReference>
<dbReference type="InterPro" id="IPR029351">
    <property type="entry name" value="GAD_dom"/>
</dbReference>
<dbReference type="InterPro" id="IPR012340">
    <property type="entry name" value="NA-bd_OB-fold"/>
</dbReference>
<dbReference type="InterPro" id="IPR004365">
    <property type="entry name" value="NA-bd_OB_tRNA"/>
</dbReference>
<dbReference type="NCBIfam" id="TIGR00459">
    <property type="entry name" value="aspS_bact"/>
    <property type="match status" value="1"/>
</dbReference>
<dbReference type="NCBIfam" id="NF001750">
    <property type="entry name" value="PRK00476.1"/>
    <property type="match status" value="1"/>
</dbReference>
<dbReference type="PANTHER" id="PTHR22594:SF5">
    <property type="entry name" value="ASPARTATE--TRNA LIGASE, MITOCHONDRIAL"/>
    <property type="match status" value="1"/>
</dbReference>
<dbReference type="PANTHER" id="PTHR22594">
    <property type="entry name" value="ASPARTYL/LYSYL-TRNA SYNTHETASE"/>
    <property type="match status" value="1"/>
</dbReference>
<dbReference type="Pfam" id="PF02938">
    <property type="entry name" value="GAD"/>
    <property type="match status" value="1"/>
</dbReference>
<dbReference type="Pfam" id="PF00152">
    <property type="entry name" value="tRNA-synt_2"/>
    <property type="match status" value="1"/>
</dbReference>
<dbReference type="Pfam" id="PF01336">
    <property type="entry name" value="tRNA_anti-codon"/>
    <property type="match status" value="1"/>
</dbReference>
<dbReference type="PRINTS" id="PR01042">
    <property type="entry name" value="TRNASYNTHASP"/>
</dbReference>
<dbReference type="SUPFAM" id="SSF55681">
    <property type="entry name" value="Class II aaRS and biotin synthetases"/>
    <property type="match status" value="1"/>
</dbReference>
<dbReference type="SUPFAM" id="SSF55261">
    <property type="entry name" value="GAD domain-like"/>
    <property type="match status" value="1"/>
</dbReference>
<dbReference type="SUPFAM" id="SSF50249">
    <property type="entry name" value="Nucleic acid-binding proteins"/>
    <property type="match status" value="1"/>
</dbReference>
<dbReference type="PROSITE" id="PS50862">
    <property type="entry name" value="AA_TRNA_LIGASE_II"/>
    <property type="match status" value="1"/>
</dbReference>
<accession>Q67LP0</accession>
<reference key="1">
    <citation type="journal article" date="2004" name="Nucleic Acids Res.">
        <title>Genome sequence of Symbiobacterium thermophilum, an uncultivable bacterium that depends on microbial commensalism.</title>
        <authorList>
            <person name="Ueda K."/>
            <person name="Yamashita A."/>
            <person name="Ishikawa J."/>
            <person name="Shimada M."/>
            <person name="Watsuji T."/>
            <person name="Morimura K."/>
            <person name="Ikeda H."/>
            <person name="Hattori M."/>
            <person name="Beppu T."/>
        </authorList>
    </citation>
    <scope>NUCLEOTIDE SEQUENCE [LARGE SCALE GENOMIC DNA]</scope>
    <source>
        <strain>DSM 24528 / JCM 14929 / IAM 14863 / T</strain>
    </source>
</reference>
<gene>
    <name evidence="1" type="primary">aspS</name>
    <name type="ordered locus">STH2421</name>
</gene>
<sequence length="593" mass="66824">MKRTVYCGEVTDALVGQEVTVNGWVQRRRDHGSLIFVDLRDRTGLVQVVFDVEECGADLFRKAEQVRSEYVLAVRGRLVHRTPEAVNPNIPTGRFEIRALDLRILSPAKTPPFYIQDDLDVDETVRLKYRYLDLRRPEMQRNLILRHRVTKAVRDFFDEHGFLEIETPMLTKSTPEGARDYLVPSRVNPGKFYALPQSPQIFKQLCMVSGLERYVQIVRCFRDEDLRADRQPEFTQIDVEMSFVERDDVLSMMEQMVARVFRDALGVEVPTPFKRLTYAEAMARYGSDKPDLRFGMELVDVSDVAAGCGFGVFKGAVEAGGQVKGINAKGCGGYSRKQIDELTEFVKTYKAKGLAYIALGEGGEVRSSFTKFLTEAETAEIVRRLEGEPGDLLLFVADQPDVVAAALGALRVEMGNRLGLRKPGEFNLLWVIDFPLLEWDEEENRFVAVHHPFTSPHPEDLDKVFKEGATREELAAIRANAYDLVLNGVELGGGSIRIHQRPLQNRMFELLGFTPEEAQAKFGFLLEAFEYGAPPHGGIAFGLDRFVMLLAGRQSIRDVIAFPKTAKATDLMTDAPSEVAPKQLQELHIRTTV</sequence>
<feature type="chain" id="PRO_0000110963" description="Aspartate--tRNA(Asp/Asn) ligase">
    <location>
        <begin position="1"/>
        <end position="593"/>
    </location>
</feature>
<feature type="region of interest" description="Aspartate" evidence="1">
    <location>
        <begin position="200"/>
        <end position="203"/>
    </location>
</feature>
<feature type="binding site" evidence="1">
    <location>
        <position position="176"/>
    </location>
    <ligand>
        <name>L-aspartate</name>
        <dbReference type="ChEBI" id="CHEBI:29991"/>
    </ligand>
</feature>
<feature type="binding site" evidence="1">
    <location>
        <begin position="222"/>
        <end position="224"/>
    </location>
    <ligand>
        <name>ATP</name>
        <dbReference type="ChEBI" id="CHEBI:30616"/>
    </ligand>
</feature>
<feature type="binding site" evidence="1">
    <location>
        <position position="222"/>
    </location>
    <ligand>
        <name>L-aspartate</name>
        <dbReference type="ChEBI" id="CHEBI:29991"/>
    </ligand>
</feature>
<feature type="binding site" evidence="1">
    <location>
        <position position="231"/>
    </location>
    <ligand>
        <name>ATP</name>
        <dbReference type="ChEBI" id="CHEBI:30616"/>
    </ligand>
</feature>
<feature type="binding site" evidence="1">
    <location>
        <position position="450"/>
    </location>
    <ligand>
        <name>L-aspartate</name>
        <dbReference type="ChEBI" id="CHEBI:29991"/>
    </ligand>
</feature>
<feature type="binding site" evidence="1">
    <location>
        <position position="490"/>
    </location>
    <ligand>
        <name>ATP</name>
        <dbReference type="ChEBI" id="CHEBI:30616"/>
    </ligand>
</feature>
<feature type="binding site" evidence="1">
    <location>
        <position position="497"/>
    </location>
    <ligand>
        <name>L-aspartate</name>
        <dbReference type="ChEBI" id="CHEBI:29991"/>
    </ligand>
</feature>
<feature type="binding site" evidence="1">
    <location>
        <begin position="542"/>
        <end position="545"/>
    </location>
    <ligand>
        <name>ATP</name>
        <dbReference type="ChEBI" id="CHEBI:30616"/>
    </ligand>
</feature>
<feature type="site" description="Important for tRNA non-discrimination" evidence="1">
    <location>
        <position position="31"/>
    </location>
</feature>
<organism>
    <name type="scientific">Symbiobacterium thermophilum (strain DSM 24528 / JCM 14929 / IAM 14863 / T)</name>
    <dbReference type="NCBI Taxonomy" id="292459"/>
    <lineage>
        <taxon>Bacteria</taxon>
        <taxon>Bacillati</taxon>
        <taxon>Bacillota</taxon>
        <taxon>Clostridia</taxon>
        <taxon>Eubacteriales</taxon>
        <taxon>Symbiobacteriaceae</taxon>
        <taxon>Symbiobacterium</taxon>
    </lineage>
</organism>
<keyword id="KW-0030">Aminoacyl-tRNA synthetase</keyword>
<keyword id="KW-0067">ATP-binding</keyword>
<keyword id="KW-0963">Cytoplasm</keyword>
<keyword id="KW-0436">Ligase</keyword>
<keyword id="KW-0547">Nucleotide-binding</keyword>
<keyword id="KW-0648">Protein biosynthesis</keyword>
<keyword id="KW-1185">Reference proteome</keyword>
<evidence type="ECO:0000255" key="1">
    <source>
        <dbReference type="HAMAP-Rule" id="MF_00044"/>
    </source>
</evidence>